<accession>Q4UQI1</accession>
<sequence length="171" mass="19019">MTRQNAYSRDQLLASARGELFGPNSGRLPNDPMLMFDRITEINDNGGSHGKGLIRAELDIRPDLWFFNCHFIGDPVMPGCLGLDAMWQLTGFFLTWIGAPGRGRALGCGEVKFTGQVLPTATLVTYEIEISRVINRKLVMAQSDARMLVDGREIYAAKDLRVGMFTSTENF</sequence>
<keyword id="KW-0963">Cytoplasm</keyword>
<keyword id="KW-0275">Fatty acid biosynthesis</keyword>
<keyword id="KW-0276">Fatty acid metabolism</keyword>
<keyword id="KW-0413">Isomerase</keyword>
<keyword id="KW-0444">Lipid biosynthesis</keyword>
<keyword id="KW-0443">Lipid metabolism</keyword>
<keyword id="KW-0456">Lyase</keyword>
<name>FABA_XANC8</name>
<organism>
    <name type="scientific">Xanthomonas campestris pv. campestris (strain 8004)</name>
    <dbReference type="NCBI Taxonomy" id="314565"/>
    <lineage>
        <taxon>Bacteria</taxon>
        <taxon>Pseudomonadati</taxon>
        <taxon>Pseudomonadota</taxon>
        <taxon>Gammaproteobacteria</taxon>
        <taxon>Lysobacterales</taxon>
        <taxon>Lysobacteraceae</taxon>
        <taxon>Xanthomonas</taxon>
    </lineage>
</organism>
<proteinExistence type="inferred from homology"/>
<evidence type="ECO:0000255" key="1">
    <source>
        <dbReference type="HAMAP-Rule" id="MF_00405"/>
    </source>
</evidence>
<gene>
    <name evidence="1" type="primary">fabA</name>
    <name type="ordered locus">XC_3651</name>
</gene>
<feature type="chain" id="PRO_0000267760" description="3-hydroxydecanoyl-[acyl-carrier-protein] dehydratase">
    <location>
        <begin position="1"/>
        <end position="171"/>
    </location>
</feature>
<feature type="active site" evidence="1">
    <location>
        <position position="70"/>
    </location>
</feature>
<comment type="function">
    <text evidence="1">Necessary for the introduction of cis unsaturation into fatty acids. Catalyzes the dehydration of (3R)-3-hydroxydecanoyl-ACP to E-(2)-decenoyl-ACP and then its isomerization to Z-(3)-decenoyl-ACP. Can catalyze the dehydratase reaction for beta-hydroxyacyl-ACPs with saturated chain lengths up to 16:0, being most active on intermediate chain length.</text>
</comment>
<comment type="catalytic activity">
    <reaction evidence="1">
        <text>a (3R)-hydroxyacyl-[ACP] = a (2E)-enoyl-[ACP] + H2O</text>
        <dbReference type="Rhea" id="RHEA:13097"/>
        <dbReference type="Rhea" id="RHEA-COMP:9925"/>
        <dbReference type="Rhea" id="RHEA-COMP:9945"/>
        <dbReference type="ChEBI" id="CHEBI:15377"/>
        <dbReference type="ChEBI" id="CHEBI:78784"/>
        <dbReference type="ChEBI" id="CHEBI:78827"/>
        <dbReference type="EC" id="4.2.1.59"/>
    </reaction>
</comment>
<comment type="catalytic activity">
    <reaction evidence="1">
        <text>(3R)-hydroxydecanoyl-[ACP] = (2E)-decenoyl-[ACP] + H2O</text>
        <dbReference type="Rhea" id="RHEA:41860"/>
        <dbReference type="Rhea" id="RHEA-COMP:9638"/>
        <dbReference type="Rhea" id="RHEA-COMP:9639"/>
        <dbReference type="ChEBI" id="CHEBI:15377"/>
        <dbReference type="ChEBI" id="CHEBI:78466"/>
        <dbReference type="ChEBI" id="CHEBI:78467"/>
    </reaction>
</comment>
<comment type="catalytic activity">
    <reaction evidence="1">
        <text>(2E)-decenoyl-[ACP] = (3Z)-decenoyl-[ACP]</text>
        <dbReference type="Rhea" id="RHEA:23568"/>
        <dbReference type="Rhea" id="RHEA-COMP:9639"/>
        <dbReference type="Rhea" id="RHEA-COMP:9927"/>
        <dbReference type="ChEBI" id="CHEBI:78467"/>
        <dbReference type="ChEBI" id="CHEBI:78798"/>
        <dbReference type="EC" id="5.3.3.14"/>
    </reaction>
</comment>
<comment type="pathway">
    <text evidence="1">Lipid metabolism; fatty acid biosynthesis.</text>
</comment>
<comment type="subunit">
    <text evidence="1">Homodimer.</text>
</comment>
<comment type="subcellular location">
    <subcellularLocation>
        <location evidence="1">Cytoplasm</location>
    </subcellularLocation>
</comment>
<comment type="similarity">
    <text evidence="1">Belongs to the thioester dehydratase family. FabA subfamily.</text>
</comment>
<reference key="1">
    <citation type="journal article" date="2005" name="Genome Res.">
        <title>Comparative and functional genomic analyses of the pathogenicity of phytopathogen Xanthomonas campestris pv. campestris.</title>
        <authorList>
            <person name="Qian W."/>
            <person name="Jia Y."/>
            <person name="Ren S.-X."/>
            <person name="He Y.-Q."/>
            <person name="Feng J.-X."/>
            <person name="Lu L.-F."/>
            <person name="Sun Q."/>
            <person name="Ying G."/>
            <person name="Tang D.-J."/>
            <person name="Tang H."/>
            <person name="Wu W."/>
            <person name="Hao P."/>
            <person name="Wang L."/>
            <person name="Jiang B.-L."/>
            <person name="Zeng S."/>
            <person name="Gu W.-Y."/>
            <person name="Lu G."/>
            <person name="Rong L."/>
            <person name="Tian Y."/>
            <person name="Yao Z."/>
            <person name="Fu G."/>
            <person name="Chen B."/>
            <person name="Fang R."/>
            <person name="Qiang B."/>
            <person name="Chen Z."/>
            <person name="Zhao G.-P."/>
            <person name="Tang J.-L."/>
            <person name="He C."/>
        </authorList>
    </citation>
    <scope>NUCLEOTIDE SEQUENCE [LARGE SCALE GENOMIC DNA]</scope>
    <source>
        <strain>8004</strain>
    </source>
</reference>
<dbReference type="EC" id="4.2.1.59" evidence="1"/>
<dbReference type="EC" id="5.3.3.14" evidence="1"/>
<dbReference type="EMBL" id="CP000050">
    <property type="protein sequence ID" value="AAY50692.1"/>
    <property type="molecule type" value="Genomic_DNA"/>
</dbReference>
<dbReference type="RefSeq" id="WP_011035827.1">
    <property type="nucleotide sequence ID" value="NZ_CP155948.1"/>
</dbReference>
<dbReference type="SMR" id="Q4UQI1"/>
<dbReference type="GeneID" id="58014856"/>
<dbReference type="KEGG" id="xcb:XC_3651"/>
<dbReference type="HOGENOM" id="CLU_097925_0_0_6"/>
<dbReference type="UniPathway" id="UPA00094"/>
<dbReference type="Proteomes" id="UP000000420">
    <property type="component" value="Chromosome"/>
</dbReference>
<dbReference type="GO" id="GO:0005737">
    <property type="term" value="C:cytoplasm"/>
    <property type="evidence" value="ECO:0007669"/>
    <property type="project" value="UniProtKB-SubCell"/>
</dbReference>
<dbReference type="GO" id="GO:0019171">
    <property type="term" value="F:(3R)-hydroxyacyl-[acyl-carrier-protein] dehydratase activity"/>
    <property type="evidence" value="ECO:0007669"/>
    <property type="project" value="UniProtKB-UniRule"/>
</dbReference>
<dbReference type="GO" id="GO:0034017">
    <property type="term" value="F:trans-2-decenoyl-acyl-carrier-protein isomerase activity"/>
    <property type="evidence" value="ECO:0007669"/>
    <property type="project" value="UniProtKB-UniRule"/>
</dbReference>
<dbReference type="GO" id="GO:0006636">
    <property type="term" value="P:unsaturated fatty acid biosynthetic process"/>
    <property type="evidence" value="ECO:0007669"/>
    <property type="project" value="UniProtKB-UniRule"/>
</dbReference>
<dbReference type="CDD" id="cd01287">
    <property type="entry name" value="FabA"/>
    <property type="match status" value="1"/>
</dbReference>
<dbReference type="Gene3D" id="3.10.129.10">
    <property type="entry name" value="Hotdog Thioesterase"/>
    <property type="match status" value="1"/>
</dbReference>
<dbReference type="HAMAP" id="MF_00405">
    <property type="entry name" value="FabA"/>
    <property type="match status" value="1"/>
</dbReference>
<dbReference type="InterPro" id="IPR010083">
    <property type="entry name" value="FabA"/>
</dbReference>
<dbReference type="InterPro" id="IPR013114">
    <property type="entry name" value="FabA_FabZ"/>
</dbReference>
<dbReference type="InterPro" id="IPR029069">
    <property type="entry name" value="HotDog_dom_sf"/>
</dbReference>
<dbReference type="NCBIfam" id="TIGR01749">
    <property type="entry name" value="fabA"/>
    <property type="match status" value="1"/>
</dbReference>
<dbReference type="NCBIfam" id="NF003509">
    <property type="entry name" value="PRK05174.1"/>
    <property type="match status" value="1"/>
</dbReference>
<dbReference type="PANTHER" id="PTHR30272">
    <property type="entry name" value="3-HYDROXYACYL-[ACYL-CARRIER-PROTEIN] DEHYDRATASE"/>
    <property type="match status" value="1"/>
</dbReference>
<dbReference type="PANTHER" id="PTHR30272:SF8">
    <property type="entry name" value="3-HYDROXYDECANOYL-[ACYL-CARRIER-PROTEIN] DEHYDRATASE"/>
    <property type="match status" value="1"/>
</dbReference>
<dbReference type="Pfam" id="PF07977">
    <property type="entry name" value="FabA"/>
    <property type="match status" value="1"/>
</dbReference>
<dbReference type="SUPFAM" id="SSF54637">
    <property type="entry name" value="Thioesterase/thiol ester dehydrase-isomerase"/>
    <property type="match status" value="1"/>
</dbReference>
<protein>
    <recommendedName>
        <fullName evidence="1">3-hydroxydecanoyl-[acyl-carrier-protein] dehydratase</fullName>
        <ecNumber evidence="1">4.2.1.59</ecNumber>
    </recommendedName>
    <alternativeName>
        <fullName evidence="1">3-hydroxyacyl-[acyl-carrier-protein] dehydratase FabA</fullName>
    </alternativeName>
    <alternativeName>
        <fullName evidence="1">Beta-hydroxydecanoyl thioester dehydrase</fullName>
    </alternativeName>
    <alternativeName>
        <fullName evidence="1">Trans-2-decenoyl-[acyl-carrier-protein] isomerase</fullName>
        <ecNumber evidence="1">5.3.3.14</ecNumber>
    </alternativeName>
</protein>